<keyword id="KW-0997">Cell inner membrane</keyword>
<keyword id="KW-1003">Cell membrane</keyword>
<keyword id="KW-0285">Flavoprotein</keyword>
<keyword id="KW-0288">FMN</keyword>
<keyword id="KW-0472">Membrane</keyword>
<keyword id="KW-0520">NAD</keyword>
<keyword id="KW-0560">Oxidoreductase</keyword>
<keyword id="KW-1185">Reference proteome</keyword>
<reference key="1">
    <citation type="journal article" date="2009" name="PLoS Genet.">
        <title>Organised genome dynamics in the Escherichia coli species results in highly diverse adaptive paths.</title>
        <authorList>
            <person name="Touchon M."/>
            <person name="Hoede C."/>
            <person name="Tenaillon O."/>
            <person name="Barbe V."/>
            <person name="Baeriswyl S."/>
            <person name="Bidet P."/>
            <person name="Bingen E."/>
            <person name="Bonacorsi S."/>
            <person name="Bouchier C."/>
            <person name="Bouvet O."/>
            <person name="Calteau A."/>
            <person name="Chiapello H."/>
            <person name="Clermont O."/>
            <person name="Cruveiller S."/>
            <person name="Danchin A."/>
            <person name="Diard M."/>
            <person name="Dossat C."/>
            <person name="Karoui M.E."/>
            <person name="Frapy E."/>
            <person name="Garry L."/>
            <person name="Ghigo J.M."/>
            <person name="Gilles A.M."/>
            <person name="Johnson J."/>
            <person name="Le Bouguenec C."/>
            <person name="Lescat M."/>
            <person name="Mangenot S."/>
            <person name="Martinez-Jehanne V."/>
            <person name="Matic I."/>
            <person name="Nassif X."/>
            <person name="Oztas S."/>
            <person name="Petit M.A."/>
            <person name="Pichon C."/>
            <person name="Rouy Z."/>
            <person name="Ruf C.S."/>
            <person name="Schneider D."/>
            <person name="Tourret J."/>
            <person name="Vacherie B."/>
            <person name="Vallenet D."/>
            <person name="Medigue C."/>
            <person name="Rocha E.P.C."/>
            <person name="Denamur E."/>
        </authorList>
    </citation>
    <scope>NUCLEOTIDE SEQUENCE [LARGE SCALE GENOMIC DNA]</scope>
    <source>
        <strain>S88 / ExPEC</strain>
    </source>
</reference>
<comment type="function">
    <text evidence="1">Regulatory subunit of a potassium efflux system that confers protection against electrophiles. Required for full activity of KefC. Shows redox enzymatic activity, but this enzymatic activity is not required for activation of KefC.</text>
</comment>
<comment type="catalytic activity">
    <reaction evidence="1">
        <text>a quinone + NADH + H(+) = a quinol + NAD(+)</text>
        <dbReference type="Rhea" id="RHEA:46160"/>
        <dbReference type="ChEBI" id="CHEBI:15378"/>
        <dbReference type="ChEBI" id="CHEBI:24646"/>
        <dbReference type="ChEBI" id="CHEBI:57540"/>
        <dbReference type="ChEBI" id="CHEBI:57945"/>
        <dbReference type="ChEBI" id="CHEBI:132124"/>
        <dbReference type="EC" id="1.6.5.2"/>
    </reaction>
</comment>
<comment type="catalytic activity">
    <reaction evidence="1">
        <text>a quinone + NADPH + H(+) = a quinol + NADP(+)</text>
        <dbReference type="Rhea" id="RHEA:46164"/>
        <dbReference type="ChEBI" id="CHEBI:15378"/>
        <dbReference type="ChEBI" id="CHEBI:24646"/>
        <dbReference type="ChEBI" id="CHEBI:57783"/>
        <dbReference type="ChEBI" id="CHEBI:58349"/>
        <dbReference type="ChEBI" id="CHEBI:132124"/>
        <dbReference type="EC" id="1.6.5.2"/>
    </reaction>
</comment>
<comment type="cofactor">
    <cofactor evidence="1">
        <name>FMN</name>
        <dbReference type="ChEBI" id="CHEBI:58210"/>
    </cofactor>
</comment>
<comment type="subunit">
    <text evidence="1">Homodimer. Interacts with KefC.</text>
</comment>
<comment type="subcellular location">
    <subcellularLocation>
        <location evidence="1">Cell inner membrane</location>
        <topology evidence="1">Peripheral membrane protein</topology>
        <orientation evidence="1">Cytoplasmic side</orientation>
    </subcellularLocation>
</comment>
<comment type="similarity">
    <text evidence="1">Belongs to the NAD(P)H dehydrogenase (quinone) family. KefF subfamily.</text>
</comment>
<sequence>MILIIYAHPYPHYSHANKRMLEQARTLEGVEIRSLYQLYPDFNIDIAAEQEALSRADLIVWQHPMQWYSIPPLLKLWIDKVFSHGWAYGHGGTALHGKHLLWAVTTGGGESHFEIGAHPGFDVLSQPLQATAIYCGLNWLPPFAMHCTFICDDETLEGQARHYKQRLLEWQEAHHG</sequence>
<proteinExistence type="inferred from homology"/>
<gene>
    <name evidence="1" type="primary">kefF</name>
    <name type="ordered locus">ECS88_0049</name>
</gene>
<feature type="chain" id="PRO_1000145553" description="Glutathione-regulated potassium-efflux system ancillary protein KefF">
    <location>
        <begin position="1"/>
        <end position="176"/>
    </location>
</feature>
<feature type="binding site" evidence="1">
    <location>
        <position position="8"/>
    </location>
    <ligand>
        <name>FMN</name>
        <dbReference type="ChEBI" id="CHEBI:58210"/>
    </ligand>
</feature>
<feature type="binding site" evidence="1">
    <location>
        <begin position="14"/>
        <end position="17"/>
    </location>
    <ligand>
        <name>FMN</name>
        <dbReference type="ChEBI" id="CHEBI:58210"/>
    </ligand>
</feature>
<feature type="binding site" evidence="1">
    <location>
        <begin position="65"/>
        <end position="68"/>
    </location>
    <ligand>
        <name>FMN</name>
        <dbReference type="ChEBI" id="CHEBI:58210"/>
    </ligand>
</feature>
<feature type="binding site" evidence="1">
    <location>
        <begin position="105"/>
        <end position="108"/>
    </location>
    <ligand>
        <name>FMN</name>
        <dbReference type="ChEBI" id="CHEBI:58210"/>
    </ligand>
</feature>
<dbReference type="EC" id="1.6.5.2" evidence="1"/>
<dbReference type="EMBL" id="CU928161">
    <property type="protein sequence ID" value="CAR01415.1"/>
    <property type="molecule type" value="Genomic_DNA"/>
</dbReference>
<dbReference type="RefSeq" id="WP_000600749.1">
    <property type="nucleotide sequence ID" value="NC_011742.1"/>
</dbReference>
<dbReference type="SMR" id="B7MAG9"/>
<dbReference type="KEGG" id="ecz:ECS88_0049"/>
<dbReference type="HOGENOM" id="CLU_058643_0_1_6"/>
<dbReference type="Proteomes" id="UP000000747">
    <property type="component" value="Chromosome"/>
</dbReference>
<dbReference type="GO" id="GO:0005886">
    <property type="term" value="C:plasma membrane"/>
    <property type="evidence" value="ECO:0007669"/>
    <property type="project" value="UniProtKB-SubCell"/>
</dbReference>
<dbReference type="GO" id="GO:0009055">
    <property type="term" value="F:electron transfer activity"/>
    <property type="evidence" value="ECO:0007669"/>
    <property type="project" value="TreeGrafter"/>
</dbReference>
<dbReference type="GO" id="GO:0010181">
    <property type="term" value="F:FMN binding"/>
    <property type="evidence" value="ECO:0007669"/>
    <property type="project" value="UniProtKB-UniRule"/>
</dbReference>
<dbReference type="GO" id="GO:0050136">
    <property type="term" value="F:NADH:ubiquinone reductase (non-electrogenic) activity"/>
    <property type="evidence" value="ECO:0007669"/>
    <property type="project" value="RHEA"/>
</dbReference>
<dbReference type="GO" id="GO:0008753">
    <property type="term" value="F:NADPH dehydrogenase (quinone) activity"/>
    <property type="evidence" value="ECO:0007669"/>
    <property type="project" value="RHEA"/>
</dbReference>
<dbReference type="GO" id="GO:1901381">
    <property type="term" value="P:positive regulation of potassium ion transmembrane transport"/>
    <property type="evidence" value="ECO:0007669"/>
    <property type="project" value="UniProtKB-UniRule"/>
</dbReference>
<dbReference type="GO" id="GO:0006813">
    <property type="term" value="P:potassium ion transport"/>
    <property type="evidence" value="ECO:0007669"/>
    <property type="project" value="InterPro"/>
</dbReference>
<dbReference type="FunFam" id="3.40.50.360:FF:000008">
    <property type="entry name" value="Glutathione-regulated potassium-efflux system ancillary protein KefF"/>
    <property type="match status" value="1"/>
</dbReference>
<dbReference type="Gene3D" id="3.40.50.360">
    <property type="match status" value="1"/>
</dbReference>
<dbReference type="HAMAP" id="MF_01414">
    <property type="entry name" value="K_H_efflux_KefF"/>
    <property type="match status" value="1"/>
</dbReference>
<dbReference type="InterPro" id="IPR003680">
    <property type="entry name" value="Flavodoxin_fold"/>
</dbReference>
<dbReference type="InterPro" id="IPR029039">
    <property type="entry name" value="Flavoprotein-like_sf"/>
</dbReference>
<dbReference type="InterPro" id="IPR023948">
    <property type="entry name" value="K_H_efflux_KefF"/>
</dbReference>
<dbReference type="InterPro" id="IPR046980">
    <property type="entry name" value="KefG/KefF"/>
</dbReference>
<dbReference type="NCBIfam" id="NF002044">
    <property type="entry name" value="PRK00871.1"/>
    <property type="match status" value="1"/>
</dbReference>
<dbReference type="PANTHER" id="PTHR47307:SF2">
    <property type="entry name" value="GLUTATHIONE-REGULATED POTASSIUM-EFFLUX SYSTEM ANCILLARY PROTEIN KEFF"/>
    <property type="match status" value="1"/>
</dbReference>
<dbReference type="PANTHER" id="PTHR47307">
    <property type="entry name" value="GLUTATHIONE-REGULATED POTASSIUM-EFFLUX SYSTEM ANCILLARY PROTEIN KEFG"/>
    <property type="match status" value="1"/>
</dbReference>
<dbReference type="Pfam" id="PF02525">
    <property type="entry name" value="Flavodoxin_2"/>
    <property type="match status" value="1"/>
</dbReference>
<dbReference type="SUPFAM" id="SSF52218">
    <property type="entry name" value="Flavoproteins"/>
    <property type="match status" value="1"/>
</dbReference>
<accession>B7MAG9</accession>
<evidence type="ECO:0000255" key="1">
    <source>
        <dbReference type="HAMAP-Rule" id="MF_01414"/>
    </source>
</evidence>
<protein>
    <recommendedName>
        <fullName evidence="1">Glutathione-regulated potassium-efflux system ancillary protein KefF</fullName>
    </recommendedName>
    <alternativeName>
        <fullName evidence="1">Quinone oxidoreductase KefF</fullName>
        <ecNumber evidence="1">1.6.5.2</ecNumber>
    </alternativeName>
</protein>
<name>KEFF_ECO45</name>
<organism>
    <name type="scientific">Escherichia coli O45:K1 (strain S88 / ExPEC)</name>
    <dbReference type="NCBI Taxonomy" id="585035"/>
    <lineage>
        <taxon>Bacteria</taxon>
        <taxon>Pseudomonadati</taxon>
        <taxon>Pseudomonadota</taxon>
        <taxon>Gammaproteobacteria</taxon>
        <taxon>Enterobacterales</taxon>
        <taxon>Enterobacteriaceae</taxon>
        <taxon>Escherichia</taxon>
    </lineage>
</organism>